<name>CYT6_ORYSJ</name>
<accession>Q10Q46</accession>
<comment type="function">
    <text evidence="1">Specific inhibitor of cysteine proteinases. Probably involved in the regulation of endogenous processes and in defense against pests and pathogens (By similarity).</text>
</comment>
<comment type="subcellular location">
    <subcellularLocation>
        <location evidence="3">Secreted</location>
    </subcellularLocation>
</comment>
<comment type="similarity">
    <text evidence="3">Belongs to the cystatin family. Phytocystatin subfamily.</text>
</comment>
<gene>
    <name type="ordered locus">Os03g0210200</name>
    <name type="ordered locus">LOC_Os03g11180</name>
</gene>
<proteinExistence type="inferred from homology"/>
<feature type="signal peptide" evidence="2">
    <location>
        <begin position="1"/>
        <end position="18"/>
    </location>
</feature>
<feature type="chain" id="PRO_0000277503" description="Cysteine proteinase inhibitor 6">
    <location>
        <begin position="19"/>
        <end position="113"/>
    </location>
</feature>
<feature type="short sequence motif" description="Secondary area of contact" evidence="1">
    <location>
        <begin position="65"/>
        <end position="69"/>
    </location>
</feature>
<feature type="site" description="Reactive site" evidence="1">
    <location>
        <position position="22"/>
    </location>
</feature>
<feature type="sequence conflict" description="In Ref. 5; AK111138." evidence="3" ref="5">
    <original>E</original>
    <variation>K</variation>
    <location>
        <position position="97"/>
    </location>
</feature>
<reference key="1">
    <citation type="journal article" date="2005" name="Genome Res.">
        <title>Sequence, annotation, and analysis of synteny between rice chromosome 3 and diverged grass species.</title>
        <authorList>
            <consortium name="The rice chromosome 3 sequencing consortium"/>
            <person name="Buell C.R."/>
            <person name="Yuan Q."/>
            <person name="Ouyang S."/>
            <person name="Liu J."/>
            <person name="Zhu W."/>
            <person name="Wang A."/>
            <person name="Maiti R."/>
            <person name="Haas B."/>
            <person name="Wortman J."/>
            <person name="Pertea M."/>
            <person name="Jones K.M."/>
            <person name="Kim M."/>
            <person name="Overton L."/>
            <person name="Tsitrin T."/>
            <person name="Fadrosh D."/>
            <person name="Bera J."/>
            <person name="Weaver B."/>
            <person name="Jin S."/>
            <person name="Johri S."/>
            <person name="Reardon M."/>
            <person name="Webb K."/>
            <person name="Hill J."/>
            <person name="Moffat K."/>
            <person name="Tallon L."/>
            <person name="Van Aken S."/>
            <person name="Lewis M."/>
            <person name="Utterback T."/>
            <person name="Feldblyum T."/>
            <person name="Zismann V."/>
            <person name="Iobst S."/>
            <person name="Hsiao J."/>
            <person name="de Vazeille A.R."/>
            <person name="Salzberg S.L."/>
            <person name="White O."/>
            <person name="Fraser C.M."/>
            <person name="Yu Y."/>
            <person name="Kim H."/>
            <person name="Rambo T."/>
            <person name="Currie J."/>
            <person name="Collura K."/>
            <person name="Kernodle-Thompson S."/>
            <person name="Wei F."/>
            <person name="Kudrna K."/>
            <person name="Ammiraju J.S.S."/>
            <person name="Luo M."/>
            <person name="Goicoechea J.L."/>
            <person name="Wing R.A."/>
            <person name="Henry D."/>
            <person name="Oates R."/>
            <person name="Palmer M."/>
            <person name="Pries G."/>
            <person name="Saski C."/>
            <person name="Simmons J."/>
            <person name="Soderlund C."/>
            <person name="Nelson W."/>
            <person name="de la Bastide M."/>
            <person name="Spiegel L."/>
            <person name="Nascimento L."/>
            <person name="Huang E."/>
            <person name="Preston R."/>
            <person name="Zutavern T."/>
            <person name="Palmer L."/>
            <person name="O'Shaughnessy A."/>
            <person name="Dike S."/>
            <person name="McCombie W.R."/>
            <person name="Minx P."/>
            <person name="Cordum H."/>
            <person name="Wilson R."/>
            <person name="Jin W."/>
            <person name="Lee H.R."/>
            <person name="Jiang J."/>
            <person name="Jackson S."/>
        </authorList>
    </citation>
    <scope>NUCLEOTIDE SEQUENCE [LARGE SCALE GENOMIC DNA]</scope>
    <source>
        <strain>cv. Nipponbare</strain>
    </source>
</reference>
<reference key="2">
    <citation type="journal article" date="2005" name="Nature">
        <title>The map-based sequence of the rice genome.</title>
        <authorList>
            <consortium name="International rice genome sequencing project (IRGSP)"/>
        </authorList>
    </citation>
    <scope>NUCLEOTIDE SEQUENCE [LARGE SCALE GENOMIC DNA]</scope>
    <source>
        <strain>cv. Nipponbare</strain>
    </source>
</reference>
<reference key="3">
    <citation type="journal article" date="2008" name="Nucleic Acids Res.">
        <title>The rice annotation project database (RAP-DB): 2008 update.</title>
        <authorList>
            <consortium name="The rice annotation project (RAP)"/>
        </authorList>
    </citation>
    <scope>GENOME REANNOTATION</scope>
    <source>
        <strain>cv. Nipponbare</strain>
    </source>
</reference>
<reference key="4">
    <citation type="journal article" date="2013" name="Rice">
        <title>Improvement of the Oryza sativa Nipponbare reference genome using next generation sequence and optical map data.</title>
        <authorList>
            <person name="Kawahara Y."/>
            <person name="de la Bastide M."/>
            <person name="Hamilton J.P."/>
            <person name="Kanamori H."/>
            <person name="McCombie W.R."/>
            <person name="Ouyang S."/>
            <person name="Schwartz D.C."/>
            <person name="Tanaka T."/>
            <person name="Wu J."/>
            <person name="Zhou S."/>
            <person name="Childs K.L."/>
            <person name="Davidson R.M."/>
            <person name="Lin H."/>
            <person name="Quesada-Ocampo L."/>
            <person name="Vaillancourt B."/>
            <person name="Sakai H."/>
            <person name="Lee S.S."/>
            <person name="Kim J."/>
            <person name="Numa H."/>
            <person name="Itoh T."/>
            <person name="Buell C.R."/>
            <person name="Matsumoto T."/>
        </authorList>
    </citation>
    <scope>GENOME REANNOTATION</scope>
    <source>
        <strain>cv. Nipponbare</strain>
    </source>
</reference>
<reference key="5">
    <citation type="journal article" date="2003" name="Science">
        <title>Collection, mapping, and annotation of over 28,000 cDNA clones from japonica rice.</title>
        <authorList>
            <consortium name="The rice full-length cDNA consortium"/>
        </authorList>
    </citation>
    <scope>NUCLEOTIDE SEQUENCE [LARGE SCALE MRNA]</scope>
    <source>
        <strain>cv. Nipponbare</strain>
    </source>
</reference>
<reference key="6">
    <citation type="journal article" date="2005" name="Mol. Genet. Genomics">
        <title>Comparative phylogenetic analysis of cystatin gene families from arabidopsis, rice and barley.</title>
        <authorList>
            <person name="Martinez M."/>
            <person name="Abraham Z."/>
            <person name="Carbonero P."/>
            <person name="Diaz I."/>
        </authorList>
    </citation>
    <scope>GENE FAMILY</scope>
</reference>
<protein>
    <recommendedName>
        <fullName>Cysteine proteinase inhibitor 6</fullName>
    </recommendedName>
    <alternativeName>
        <fullName>Oryzacystatin VI</fullName>
        <shortName>OC-VI</shortName>
    </alternativeName>
    <alternativeName>
        <fullName>Oryzacystatin-6</fullName>
    </alternativeName>
</protein>
<organism>
    <name type="scientific">Oryza sativa subsp. japonica</name>
    <name type="common">Rice</name>
    <dbReference type="NCBI Taxonomy" id="39947"/>
    <lineage>
        <taxon>Eukaryota</taxon>
        <taxon>Viridiplantae</taxon>
        <taxon>Streptophyta</taxon>
        <taxon>Embryophyta</taxon>
        <taxon>Tracheophyta</taxon>
        <taxon>Spermatophyta</taxon>
        <taxon>Magnoliopsida</taxon>
        <taxon>Liliopsida</taxon>
        <taxon>Poales</taxon>
        <taxon>Poaceae</taxon>
        <taxon>BOP clade</taxon>
        <taxon>Oryzoideae</taxon>
        <taxon>Oryzeae</taxon>
        <taxon>Oryzinae</taxon>
        <taxon>Oryza</taxon>
        <taxon>Oryza sativa</taxon>
    </lineage>
</organism>
<sequence>MAMTTRTLLLAAVCAAAALPRGWSPIKNIDDPHIQELGRWAITENNRVSPSDELTFHRVTGGEQQVVSGMNYRLEIEAASGGGDVTGSYGAVVFEQEWSNTRKLISFDKNHNF</sequence>
<dbReference type="EMBL" id="DP000009">
    <property type="protein sequence ID" value="ABF94588.1"/>
    <property type="molecule type" value="Genomic_DNA"/>
</dbReference>
<dbReference type="EMBL" id="AP008209">
    <property type="protein sequence ID" value="BAF11253.1"/>
    <property type="molecule type" value="Genomic_DNA"/>
</dbReference>
<dbReference type="EMBL" id="AP014959">
    <property type="status" value="NOT_ANNOTATED_CDS"/>
    <property type="molecule type" value="Genomic_DNA"/>
</dbReference>
<dbReference type="EMBL" id="AK111138">
    <property type="status" value="NOT_ANNOTATED_CDS"/>
    <property type="molecule type" value="mRNA"/>
</dbReference>
<dbReference type="RefSeq" id="XP_015630131.1">
    <property type="nucleotide sequence ID" value="XM_015774645.1"/>
</dbReference>
<dbReference type="SMR" id="Q10Q46"/>
<dbReference type="STRING" id="39947.Q10Q46"/>
<dbReference type="PaxDb" id="39947-Q10Q46"/>
<dbReference type="KEGG" id="dosa:Os03g0210200"/>
<dbReference type="eggNOG" id="ENOG502S46Q">
    <property type="taxonomic scope" value="Eukaryota"/>
</dbReference>
<dbReference type="HOGENOM" id="CLU_113093_2_1_1"/>
<dbReference type="InParanoid" id="Q10Q46"/>
<dbReference type="OrthoDB" id="752087at2759"/>
<dbReference type="Proteomes" id="UP000000763">
    <property type="component" value="Chromosome 3"/>
</dbReference>
<dbReference type="Proteomes" id="UP000059680">
    <property type="component" value="Chromosome 3"/>
</dbReference>
<dbReference type="GO" id="GO:0005576">
    <property type="term" value="C:extracellular region"/>
    <property type="evidence" value="ECO:0007669"/>
    <property type="project" value="UniProtKB-SubCell"/>
</dbReference>
<dbReference type="GO" id="GO:0004869">
    <property type="term" value="F:cysteine-type endopeptidase inhibitor activity"/>
    <property type="evidence" value="ECO:0007669"/>
    <property type="project" value="UniProtKB-KW"/>
</dbReference>
<dbReference type="GO" id="GO:0006952">
    <property type="term" value="P:defense response"/>
    <property type="evidence" value="ECO:0007669"/>
    <property type="project" value="UniProtKB-KW"/>
</dbReference>
<dbReference type="CDD" id="cd00042">
    <property type="entry name" value="CY"/>
    <property type="match status" value="1"/>
</dbReference>
<dbReference type="Gene3D" id="3.10.450.10">
    <property type="match status" value="1"/>
</dbReference>
<dbReference type="InterPro" id="IPR027214">
    <property type="entry name" value="Cystatin"/>
</dbReference>
<dbReference type="InterPro" id="IPR000010">
    <property type="entry name" value="Cystatin_dom"/>
</dbReference>
<dbReference type="InterPro" id="IPR046350">
    <property type="entry name" value="Cystatin_sf"/>
</dbReference>
<dbReference type="InterPro" id="IPR018073">
    <property type="entry name" value="Prot_inh_cystat_CS"/>
</dbReference>
<dbReference type="PANTHER" id="PTHR47116">
    <property type="entry name" value="PHLOEM FILAMENT PROTEIN"/>
    <property type="match status" value="1"/>
</dbReference>
<dbReference type="Pfam" id="PF16845">
    <property type="entry name" value="SQAPI"/>
    <property type="match status" value="1"/>
</dbReference>
<dbReference type="SMART" id="SM00043">
    <property type="entry name" value="CY"/>
    <property type="match status" value="1"/>
</dbReference>
<dbReference type="SUPFAM" id="SSF54403">
    <property type="entry name" value="Cystatin/monellin"/>
    <property type="match status" value="1"/>
</dbReference>
<dbReference type="PROSITE" id="PS00287">
    <property type="entry name" value="CYSTATIN"/>
    <property type="match status" value="1"/>
</dbReference>
<evidence type="ECO:0000250" key="1"/>
<evidence type="ECO:0000255" key="2"/>
<evidence type="ECO:0000305" key="3"/>
<keyword id="KW-0611">Plant defense</keyword>
<keyword id="KW-0646">Protease inhibitor</keyword>
<keyword id="KW-1185">Reference proteome</keyword>
<keyword id="KW-0964">Secreted</keyword>
<keyword id="KW-0732">Signal</keyword>
<keyword id="KW-0789">Thiol protease inhibitor</keyword>